<reference key="1">
    <citation type="journal article" date="2011" name="J. Bacteriol.">
        <title>Genome of Ochrobactrum anthropi ATCC 49188 T, a versatile opportunistic pathogen and symbiont of several eukaryotic hosts.</title>
        <authorList>
            <person name="Chain P.S."/>
            <person name="Lang D.M."/>
            <person name="Comerci D.J."/>
            <person name="Malfatti S.A."/>
            <person name="Vergez L.M."/>
            <person name="Shin M."/>
            <person name="Ugalde R.A."/>
            <person name="Garcia E."/>
            <person name="Tolmasky M.E."/>
        </authorList>
    </citation>
    <scope>NUCLEOTIDE SEQUENCE [LARGE SCALE GENOMIC DNA]</scope>
    <source>
        <strain>ATCC 49188 / DSM 6882 / CCUG 24695 / JCM 21032 / LMG 3331 / NBRC 15819 / NCTC 12168 / Alc 37</strain>
    </source>
</reference>
<name>TRPC_BRUA4</name>
<organism>
    <name type="scientific">Brucella anthropi (strain ATCC 49188 / DSM 6882 / CCUG 24695 / JCM 21032 / LMG 3331 / NBRC 15819 / NCTC 12168 / Alc 37)</name>
    <name type="common">Ochrobactrum anthropi</name>
    <dbReference type="NCBI Taxonomy" id="439375"/>
    <lineage>
        <taxon>Bacteria</taxon>
        <taxon>Pseudomonadati</taxon>
        <taxon>Pseudomonadota</taxon>
        <taxon>Alphaproteobacteria</taxon>
        <taxon>Hyphomicrobiales</taxon>
        <taxon>Brucellaceae</taxon>
        <taxon>Brucella/Ochrobactrum group</taxon>
        <taxon>Brucella</taxon>
    </lineage>
</organism>
<evidence type="ECO:0000255" key="1">
    <source>
        <dbReference type="HAMAP-Rule" id="MF_00134"/>
    </source>
</evidence>
<dbReference type="EC" id="4.1.1.48" evidence="1"/>
<dbReference type="EMBL" id="CP000758">
    <property type="protein sequence ID" value="ABS14764.1"/>
    <property type="molecule type" value="Genomic_DNA"/>
</dbReference>
<dbReference type="RefSeq" id="WP_012091964.1">
    <property type="nucleotide sequence ID" value="NC_009667.1"/>
</dbReference>
<dbReference type="SMR" id="A6X0L0"/>
<dbReference type="STRING" id="439375.Oant_2048"/>
<dbReference type="KEGG" id="oan:Oant_2048"/>
<dbReference type="PATRIC" id="fig|439375.7.peg.2153"/>
<dbReference type="eggNOG" id="COG0134">
    <property type="taxonomic scope" value="Bacteria"/>
</dbReference>
<dbReference type="HOGENOM" id="CLU_034247_2_0_5"/>
<dbReference type="PhylomeDB" id="A6X0L0"/>
<dbReference type="UniPathway" id="UPA00035">
    <property type="reaction ID" value="UER00043"/>
</dbReference>
<dbReference type="Proteomes" id="UP000002301">
    <property type="component" value="Chromosome 1"/>
</dbReference>
<dbReference type="GO" id="GO:0004425">
    <property type="term" value="F:indole-3-glycerol-phosphate synthase activity"/>
    <property type="evidence" value="ECO:0007669"/>
    <property type="project" value="UniProtKB-UniRule"/>
</dbReference>
<dbReference type="GO" id="GO:0004640">
    <property type="term" value="F:phosphoribosylanthranilate isomerase activity"/>
    <property type="evidence" value="ECO:0007669"/>
    <property type="project" value="TreeGrafter"/>
</dbReference>
<dbReference type="GO" id="GO:0000162">
    <property type="term" value="P:L-tryptophan biosynthetic process"/>
    <property type="evidence" value="ECO:0007669"/>
    <property type="project" value="UniProtKB-UniRule"/>
</dbReference>
<dbReference type="CDD" id="cd00331">
    <property type="entry name" value="IGPS"/>
    <property type="match status" value="1"/>
</dbReference>
<dbReference type="FunFam" id="3.20.20.70:FF:000024">
    <property type="entry name" value="Indole-3-glycerol phosphate synthase"/>
    <property type="match status" value="1"/>
</dbReference>
<dbReference type="Gene3D" id="3.20.20.70">
    <property type="entry name" value="Aldolase class I"/>
    <property type="match status" value="1"/>
</dbReference>
<dbReference type="HAMAP" id="MF_00134_B">
    <property type="entry name" value="IGPS_B"/>
    <property type="match status" value="1"/>
</dbReference>
<dbReference type="InterPro" id="IPR013785">
    <property type="entry name" value="Aldolase_TIM"/>
</dbReference>
<dbReference type="InterPro" id="IPR045186">
    <property type="entry name" value="Indole-3-glycerol_P_synth"/>
</dbReference>
<dbReference type="InterPro" id="IPR013798">
    <property type="entry name" value="Indole-3-glycerol_P_synth_dom"/>
</dbReference>
<dbReference type="InterPro" id="IPR001468">
    <property type="entry name" value="Indole-3-GlycerolPSynthase_CS"/>
</dbReference>
<dbReference type="InterPro" id="IPR011060">
    <property type="entry name" value="RibuloseP-bd_barrel"/>
</dbReference>
<dbReference type="NCBIfam" id="NF001370">
    <property type="entry name" value="PRK00278.1-2"/>
    <property type="match status" value="1"/>
</dbReference>
<dbReference type="NCBIfam" id="NF001373">
    <property type="entry name" value="PRK00278.1-6"/>
    <property type="match status" value="1"/>
</dbReference>
<dbReference type="NCBIfam" id="NF001377">
    <property type="entry name" value="PRK00278.2-4"/>
    <property type="match status" value="1"/>
</dbReference>
<dbReference type="PANTHER" id="PTHR22854:SF2">
    <property type="entry name" value="INDOLE-3-GLYCEROL-PHOSPHATE SYNTHASE"/>
    <property type="match status" value="1"/>
</dbReference>
<dbReference type="PANTHER" id="PTHR22854">
    <property type="entry name" value="TRYPTOPHAN BIOSYNTHESIS PROTEIN"/>
    <property type="match status" value="1"/>
</dbReference>
<dbReference type="Pfam" id="PF00218">
    <property type="entry name" value="IGPS"/>
    <property type="match status" value="1"/>
</dbReference>
<dbReference type="SUPFAM" id="SSF51366">
    <property type="entry name" value="Ribulose-phoshate binding barrel"/>
    <property type="match status" value="1"/>
</dbReference>
<dbReference type="PROSITE" id="PS00614">
    <property type="entry name" value="IGPS"/>
    <property type="match status" value="1"/>
</dbReference>
<accession>A6X0L0</accession>
<protein>
    <recommendedName>
        <fullName evidence="1">Indole-3-glycerol phosphate synthase</fullName>
        <shortName evidence="1">IGPS</shortName>
        <ecNumber evidence="1">4.1.1.48</ecNumber>
    </recommendedName>
</protein>
<feature type="chain" id="PRO_1000018515" description="Indole-3-glycerol phosphate synthase">
    <location>
        <begin position="1"/>
        <end position="266"/>
    </location>
</feature>
<sequence length="266" mass="28913">MSTDILRKIEAYKREEIAAAKAERTVADLKARAQDQEAPRGFFKALEAKRAAGEFALIAEIKKASPSKGLIRPDFDPPALAKAYEAGGAACLSVLTDTPSFQGAPEFLTAARNACSLPALRKDFLFDTYQVHEARSWGADCILIILASVDDDLAKALEETAFELGMDALIEVHDEAEMERALKLSSRLLGVNNRNLRTFEVDLAVSERLSKMAPADRVLVGESGIFTHEDCLRLKKSGIGTFLIGESLMRQADVAAATRELLTGKA</sequence>
<proteinExistence type="inferred from homology"/>
<gene>
    <name evidence="1" type="primary">trpC</name>
    <name type="ordered locus">Oant_2048</name>
</gene>
<comment type="catalytic activity">
    <reaction evidence="1">
        <text>1-(2-carboxyphenylamino)-1-deoxy-D-ribulose 5-phosphate + H(+) = (1S,2R)-1-C-(indol-3-yl)glycerol 3-phosphate + CO2 + H2O</text>
        <dbReference type="Rhea" id="RHEA:23476"/>
        <dbReference type="ChEBI" id="CHEBI:15377"/>
        <dbReference type="ChEBI" id="CHEBI:15378"/>
        <dbReference type="ChEBI" id="CHEBI:16526"/>
        <dbReference type="ChEBI" id="CHEBI:58613"/>
        <dbReference type="ChEBI" id="CHEBI:58866"/>
        <dbReference type="EC" id="4.1.1.48"/>
    </reaction>
</comment>
<comment type="pathway">
    <text evidence="1">Amino-acid biosynthesis; L-tryptophan biosynthesis; L-tryptophan from chorismate: step 4/5.</text>
</comment>
<comment type="similarity">
    <text evidence="1">Belongs to the TrpC family.</text>
</comment>
<keyword id="KW-0028">Amino-acid biosynthesis</keyword>
<keyword id="KW-0057">Aromatic amino acid biosynthesis</keyword>
<keyword id="KW-0210">Decarboxylase</keyword>
<keyword id="KW-0456">Lyase</keyword>
<keyword id="KW-1185">Reference proteome</keyword>
<keyword id="KW-0822">Tryptophan biosynthesis</keyword>